<keyword id="KW-0002">3D-structure</keyword>
<keyword id="KW-0025">Alternative splicing</keyword>
<keyword id="KW-0963">Cytoplasm</keyword>
<keyword id="KW-1017">Isopeptide bond</keyword>
<keyword id="KW-0509">mRNA transport</keyword>
<keyword id="KW-0539">Nucleus</keyword>
<keyword id="KW-0597">Phosphoprotein</keyword>
<keyword id="KW-1267">Proteomics identification</keyword>
<keyword id="KW-1185">Reference proteome</keyword>
<keyword id="KW-0677">Repeat</keyword>
<keyword id="KW-0694">RNA-binding</keyword>
<keyword id="KW-0810">Translation regulation</keyword>
<keyword id="KW-0813">Transport</keyword>
<keyword id="KW-0832">Ubl conjugation</keyword>
<proteinExistence type="evidence at protein level"/>
<feature type="chain" id="PRO_0000282538" description="Insulin-like growth factor 2 mRNA-binding protein 3">
    <location>
        <begin position="1"/>
        <end position="579"/>
    </location>
</feature>
<feature type="domain" description="RRM 1" evidence="2">
    <location>
        <begin position="2"/>
        <end position="75"/>
    </location>
</feature>
<feature type="domain" description="RRM 2" evidence="2">
    <location>
        <begin position="81"/>
        <end position="156"/>
    </location>
</feature>
<feature type="domain" description="KH 1" evidence="1">
    <location>
        <begin position="195"/>
        <end position="260"/>
    </location>
</feature>
<feature type="domain" description="KH 2" evidence="1">
    <location>
        <begin position="276"/>
        <end position="343"/>
    </location>
</feature>
<feature type="domain" description="KH 3" evidence="1">
    <location>
        <begin position="405"/>
        <end position="470"/>
    </location>
</feature>
<feature type="domain" description="KH 4" evidence="1">
    <location>
        <begin position="487"/>
        <end position="553"/>
    </location>
</feature>
<feature type="region of interest" description="Disordered" evidence="3">
    <location>
        <begin position="160"/>
        <end position="192"/>
    </location>
</feature>
<feature type="compositionally biased region" description="Low complexity" evidence="3">
    <location>
        <begin position="177"/>
        <end position="187"/>
    </location>
</feature>
<feature type="modified residue" description="Phosphoserine" evidence="20">
    <location>
        <position position="184"/>
    </location>
</feature>
<feature type="modified residue" description="Phosphothreonine" evidence="19 20 21">
    <location>
        <position position="528"/>
    </location>
</feature>
<feature type="cross-link" description="Glycyl lysine isopeptide (Lys-Gly) (interchain with G-Cter in SUMO2)" evidence="23">
    <location>
        <position position="450"/>
    </location>
</feature>
<feature type="cross-link" description="Glycyl lysine isopeptide (Lys-Gly) (interchain with G-Cter in SUMO2)" evidence="22 23">
    <location>
        <position position="475"/>
    </location>
</feature>
<feature type="splice variant" id="VSP_024172" description="In isoform 2." evidence="17">
    <location>
        <begin position="1"/>
        <end position="381"/>
    </location>
</feature>
<feature type="mutagenesis site" description="Partial reduction in interaction with m6A-modified mRNA; when associated with E-294. Loss of homo- and heterooligomerization with IGF2BP1 and IGF2BP2, modestly impaired binding to ACTB and MYC transcripts and almost no effect on ELAVL1-, DHX9- and HNRNPU-binding, nor on subcellular location; when associated with E-294; 422-E-E-423 and 505-E-E-506." evidence="13 14">
    <original>K</original>
    <variation>E</variation>
    <location>
        <position position="213"/>
    </location>
</feature>
<feature type="mutagenesis site" description="Partial reduction in interaction with m6A-modified mRNA; when associated with E-213. Loss of homo- and heterooligomerization with IGF2BP1 and IGF2BP2, modestly impaired binding to ACTB and MYC transcripts and almost no effect on ELAVL1-, DHX9- and HNRNPU-binding, nor on subcellular location; when associated with E-213; 422-E-E-423 and 505-E-E-506." evidence="13 14">
    <original>K</original>
    <variation>E</variation>
    <location>
        <position position="294"/>
    </location>
</feature>
<feature type="mutagenesis site" description="Loss of interaction with m6A-modified mRNA; when associated with 505-E-E-506. Loss of homo- and heterooligomerization with IGF2BP1 and IGF2BP2, modestly impaired binding to ACTB and MYC transcripts and almost no effect on ELAVL1-, DHX9- and HNRNPU-binding, nor on subcellular location; when associated with E-213; E-294 and 505-E-E-506." evidence="13 14">
    <original>KQ</original>
    <variation>EE</variation>
    <location>
        <begin position="423"/>
        <end position="424"/>
    </location>
</feature>
<feature type="mutagenesis site" description="Loss of interaction with m6A-modified mRNA; when associated with 422-E-E-423. Loss of homo- and heterooligomerization with IGF2BP1 and IGF2BP2, modestly impaired binding to ACTB and MYC transcripts and almost no effect on ELAVL1-, DHX9- and HNRNPU-binding, nor on subcellular location; when associated with E-213; E-294 and 422-E-E-423." evidence="13 14">
    <original>KG</original>
    <variation>EE</variation>
    <location>
        <begin position="505"/>
        <end position="506"/>
    </location>
</feature>
<feature type="sequence conflict" description="In Ref. 1; AAD09223/AAC35208." evidence="18" ref="1">
    <original>L</original>
    <variation>Q</variation>
    <location>
        <position position="410"/>
    </location>
</feature>
<feature type="sequence conflict" description="In Ref. 2; CAH56186." evidence="18" ref="2">
    <original>V</original>
    <variation>A</variation>
    <location>
        <position position="494"/>
    </location>
</feature>
<feature type="strand" evidence="25">
    <location>
        <begin position="3"/>
        <end position="8"/>
    </location>
</feature>
<feature type="helix" evidence="25">
    <location>
        <begin position="15"/>
        <end position="24"/>
    </location>
</feature>
<feature type="strand" evidence="25">
    <location>
        <begin position="40"/>
        <end position="43"/>
    </location>
</feature>
<feature type="helix" evidence="25">
    <location>
        <begin position="47"/>
        <end position="57"/>
    </location>
</feature>
<feature type="turn" evidence="25">
    <location>
        <begin position="58"/>
        <end position="60"/>
    </location>
</feature>
<feature type="strand" evidence="26">
    <location>
        <begin position="61"/>
        <end position="63"/>
    </location>
</feature>
<feature type="strand" evidence="25">
    <location>
        <begin position="69"/>
        <end position="72"/>
    </location>
</feature>
<feature type="helix" evidence="25">
    <location>
        <begin position="76"/>
        <end position="78"/>
    </location>
</feature>
<feature type="strand" evidence="25">
    <location>
        <begin position="80"/>
        <end position="88"/>
    </location>
</feature>
<feature type="strand" evidence="24">
    <location>
        <begin position="90"/>
        <end position="92"/>
    </location>
</feature>
<feature type="helix" evidence="25">
    <location>
        <begin position="94"/>
        <end position="101"/>
    </location>
</feature>
<feature type="strand" evidence="25">
    <location>
        <begin position="107"/>
        <end position="112"/>
    </location>
</feature>
<feature type="strand" evidence="25">
    <location>
        <begin position="116"/>
        <end position="128"/>
    </location>
</feature>
<feature type="helix" evidence="25">
    <location>
        <begin position="129"/>
        <end position="139"/>
    </location>
</feature>
<feature type="strand" evidence="25">
    <location>
        <begin position="150"/>
        <end position="153"/>
    </location>
</feature>
<feature type="helix" evidence="25">
    <location>
        <begin position="157"/>
        <end position="159"/>
    </location>
</feature>
<accession>O00425</accession>
<accession>A0A4Z5</accession>
<accession>Q63HM0</accession>
<accession>Q6MZZ2</accession>
<accession>Q86VB1</accession>
<reference key="1">
    <citation type="journal article" date="1997" name="Oncogene">
        <title>Cloning of a gene highly overexpressed in cancer coding for a novel KH-domain containing protein.</title>
        <authorList>
            <person name="Mueller-Pillasch F."/>
            <person name="Lacher U."/>
            <person name="Wallrapp C."/>
            <person name="Micha A."/>
            <person name="Zimmerhackl F."/>
            <person name="Hameister H."/>
            <person name="Varga G."/>
            <person name="Friess H."/>
            <person name="Buechler M."/>
            <person name="Beger H.G."/>
            <person name="Vila M.R."/>
            <person name="Adler G."/>
            <person name="Gress T.M."/>
        </authorList>
    </citation>
    <scope>NUCLEOTIDE SEQUENCE [MRNA] (ISOFORM 1)</scope>
    <scope>TISSUE SPECIFICITY</scope>
    <source>
        <tissue>Pancreas</tissue>
        <tissue>Pancreatic cancer</tissue>
    </source>
</reference>
<reference key="2">
    <citation type="journal article" date="2007" name="BMC Genomics">
        <title>The full-ORF clone resource of the German cDNA consortium.</title>
        <authorList>
            <person name="Bechtel S."/>
            <person name="Rosenfelder H."/>
            <person name="Duda A."/>
            <person name="Schmidt C.P."/>
            <person name="Ernst U."/>
            <person name="Wellenreuther R."/>
            <person name="Mehrle A."/>
            <person name="Schuster C."/>
            <person name="Bahr A."/>
            <person name="Bloecker H."/>
            <person name="Heubner D."/>
            <person name="Hoerlein A."/>
            <person name="Michel G."/>
            <person name="Wedler H."/>
            <person name="Koehrer K."/>
            <person name="Ottenwaelder B."/>
            <person name="Poustka A."/>
            <person name="Wiemann S."/>
            <person name="Schupp I."/>
        </authorList>
    </citation>
    <scope>NUCLEOTIDE SEQUENCE [LARGE SCALE MRNA] (ISOFORM 2)</scope>
    <source>
        <tissue>Endometrial tumor</tissue>
    </source>
</reference>
<reference key="3">
    <citation type="journal article" date="2003" name="Nature">
        <title>The DNA sequence of human chromosome 7.</title>
        <authorList>
            <person name="Hillier L.W."/>
            <person name="Fulton R.S."/>
            <person name="Fulton L.A."/>
            <person name="Graves T.A."/>
            <person name="Pepin K.H."/>
            <person name="Wagner-McPherson C."/>
            <person name="Layman D."/>
            <person name="Maas J."/>
            <person name="Jaeger S."/>
            <person name="Walker R."/>
            <person name="Wylie K."/>
            <person name="Sekhon M."/>
            <person name="Becker M.C."/>
            <person name="O'Laughlin M.D."/>
            <person name="Schaller M.E."/>
            <person name="Fewell G.A."/>
            <person name="Delehaunty K.D."/>
            <person name="Miner T.L."/>
            <person name="Nash W.E."/>
            <person name="Cordes M."/>
            <person name="Du H."/>
            <person name="Sun H."/>
            <person name="Edwards J."/>
            <person name="Bradshaw-Cordum H."/>
            <person name="Ali J."/>
            <person name="Andrews S."/>
            <person name="Isak A."/>
            <person name="Vanbrunt A."/>
            <person name="Nguyen C."/>
            <person name="Du F."/>
            <person name="Lamar B."/>
            <person name="Courtney L."/>
            <person name="Kalicki J."/>
            <person name="Ozersky P."/>
            <person name="Bielicki L."/>
            <person name="Scott K."/>
            <person name="Holmes A."/>
            <person name="Harkins R."/>
            <person name="Harris A."/>
            <person name="Strong C.M."/>
            <person name="Hou S."/>
            <person name="Tomlinson C."/>
            <person name="Dauphin-Kohlberg S."/>
            <person name="Kozlowicz-Reilly A."/>
            <person name="Leonard S."/>
            <person name="Rohlfing T."/>
            <person name="Rock S.M."/>
            <person name="Tin-Wollam A.-M."/>
            <person name="Abbott A."/>
            <person name="Minx P."/>
            <person name="Maupin R."/>
            <person name="Strowmatt C."/>
            <person name="Latreille P."/>
            <person name="Miller N."/>
            <person name="Johnson D."/>
            <person name="Murray J."/>
            <person name="Woessner J.P."/>
            <person name="Wendl M.C."/>
            <person name="Yang S.-P."/>
            <person name="Schultz B.R."/>
            <person name="Wallis J.W."/>
            <person name="Spieth J."/>
            <person name="Bieri T.A."/>
            <person name="Nelson J.O."/>
            <person name="Berkowicz N."/>
            <person name="Wohldmann P.E."/>
            <person name="Cook L.L."/>
            <person name="Hickenbotham M.T."/>
            <person name="Eldred J."/>
            <person name="Williams D."/>
            <person name="Bedell J.A."/>
            <person name="Mardis E.R."/>
            <person name="Clifton S.W."/>
            <person name="Chissoe S.L."/>
            <person name="Marra M.A."/>
            <person name="Raymond C."/>
            <person name="Haugen E."/>
            <person name="Gillett W."/>
            <person name="Zhou Y."/>
            <person name="James R."/>
            <person name="Phelps K."/>
            <person name="Iadanoto S."/>
            <person name="Bubb K."/>
            <person name="Simms E."/>
            <person name="Levy R."/>
            <person name="Clendenning J."/>
            <person name="Kaul R."/>
            <person name="Kent W.J."/>
            <person name="Furey T.S."/>
            <person name="Baertsch R.A."/>
            <person name="Brent M.R."/>
            <person name="Keibler E."/>
            <person name="Flicek P."/>
            <person name="Bork P."/>
            <person name="Suyama M."/>
            <person name="Bailey J.A."/>
            <person name="Portnoy M.E."/>
            <person name="Torrents D."/>
            <person name="Chinwalla A.T."/>
            <person name="Gish W.R."/>
            <person name="Eddy S.R."/>
            <person name="McPherson J.D."/>
            <person name="Olson M.V."/>
            <person name="Eichler E.E."/>
            <person name="Green E.D."/>
            <person name="Waterston R.H."/>
            <person name="Wilson R.K."/>
        </authorList>
    </citation>
    <scope>NUCLEOTIDE SEQUENCE [LARGE SCALE GENOMIC DNA]</scope>
</reference>
<reference key="4">
    <citation type="journal article" date="2004" name="Genome Res.">
        <title>The status, quality, and expansion of the NIH full-length cDNA project: the Mammalian Gene Collection (MGC).</title>
        <authorList>
            <consortium name="The MGC Project Team"/>
        </authorList>
    </citation>
    <scope>NUCLEOTIDE SEQUENCE [LARGE SCALE MRNA] (ISOFORM 1)</scope>
    <source>
        <tissue>Eye</tissue>
    </source>
</reference>
<reference key="5">
    <citation type="journal article" date="1999" name="Mech. Dev.">
        <title>Expression of the highly conserved RNA binding protein KOC in embryogenesis.</title>
        <authorList>
            <person name="Mueller-Pillasch F."/>
            <person name="Pohl B."/>
            <person name="Wilda M."/>
            <person name="Lacher U."/>
            <person name="Beil M."/>
            <person name="Wallrapp C."/>
            <person name="Hameister H."/>
            <person name="Knoechel W."/>
            <person name="Adler G."/>
            <person name="Gress T.M."/>
        </authorList>
    </citation>
    <scope>TISSUE SPECIFICITY</scope>
</reference>
<reference key="6">
    <citation type="journal article" date="1999" name="Mol. Cell. Biol.">
        <title>A family of insulin-like growth factor II mRNA-binding proteins represses translation in late development.</title>
        <authorList>
            <person name="Nielsen J."/>
            <person name="Christiansen J."/>
            <person name="Lykke-Andersen J."/>
            <person name="Johnsen A.H."/>
            <person name="Wewer U.M."/>
            <person name="Nielsen F.C."/>
        </authorList>
    </citation>
    <scope>GENE NOMENCLATURE</scope>
    <scope>SUBCELLULAR LOCATION</scope>
    <scope>TISSUE SPECIFICITY</scope>
    <scope>RNA-BINDING</scope>
</reference>
<reference key="7">
    <citation type="journal article" date="2001" name="Clin. Immunol.">
        <title>Autoimmune responses to mRNA binding proteins p62 and Koc in diverse malignancies.</title>
        <authorList>
            <person name="Zhang J.-Y."/>
            <person name="Chan E.K."/>
            <person name="Peng X.-X."/>
            <person name="Lu M."/>
            <person name="Wang X."/>
            <person name="Mueller F."/>
            <person name="Tan E.M."/>
        </authorList>
    </citation>
    <scope>IDENTIFICATION AS A CARCINOMA ANTIGEN</scope>
</reference>
<reference key="8">
    <citation type="journal article" date="2002" name="J. Med. Genet.">
        <title>Characterisation of the growth regulating gene IMP3, a candidate for Silver-Russell syndrome.</title>
        <authorList>
            <person name="Monk D."/>
            <person name="Bentley L."/>
            <person name="Beechey C."/>
            <person name="Hitchins M."/>
            <person name="Peters J."/>
            <person name="Preece M.A."/>
            <person name="Stanier P."/>
            <person name="Moore G.E."/>
        </authorList>
    </citation>
    <scope>TISSUE SPECIFICITY</scope>
</reference>
<reference key="9">
    <citation type="journal article" date="2003" name="Biochem. J.">
        <title>Nuclear transit of human zipcode-binding protein IMP1.</title>
        <authorList>
            <person name="Nielsen J."/>
            <person name="Adolph S.K."/>
            <person name="Rajpert-De Meyts E."/>
            <person name="Lykke-Andersen J."/>
            <person name="Koch G."/>
            <person name="Christiansen J."/>
            <person name="Nielsen F.C."/>
        </authorList>
    </citation>
    <scope>SUBCELLULAR LOCATION</scope>
</reference>
<reference key="10">
    <citation type="journal article" date="2005" name="Biol. Cell">
        <title>VICKZ proteins: a multi-talented family of regulatory RNA-binding proteins.</title>
        <authorList>
            <person name="Yisraeli J.K."/>
        </authorList>
    </citation>
    <scope>REVIEW</scope>
</reference>
<reference key="11">
    <citation type="journal article" date="2005" name="Diagn. Mol. Pathol.">
        <title>KOC (K homology domain containing protein overexpressed in cancer): a novel molecular marker that distinguishes between benign and malignant lesions of the pancreas.</title>
        <authorList>
            <person name="Yantiss R.K."/>
            <person name="Woda B.A."/>
            <person name="Fanger G.R."/>
            <person name="Kalos M."/>
            <person name="Whalen G.F."/>
            <person name="Tada H."/>
            <person name="Andersen D.K."/>
            <person name="Rock K.L."/>
            <person name="Dresser K."/>
        </authorList>
    </citation>
    <scope>SUBCELLULAR LOCATION</scope>
    <scope>TISSUE SPECIFICITY</scope>
</reference>
<reference key="12">
    <citation type="journal article" date="2005" name="Reproduction">
        <title>Expression of IGF-II mRNA-binding proteins (IMPs) in gonads and testicular cancer.</title>
        <authorList>
            <person name="Hammer N.A."/>
            <person name="Hansen T.O."/>
            <person name="Byskov A.G."/>
            <person name="Rajpert-De Meyts E."/>
            <person name="Groendahl M.L."/>
            <person name="Bredkjaer H.E."/>
            <person name="Wewer U.M."/>
            <person name="Christiansen J."/>
            <person name="Nielsen F.C."/>
        </authorList>
    </citation>
    <scope>SUBCELLULAR LOCATION</scope>
    <scope>TISSUE SPECIFICITY</scope>
</reference>
<reference key="13">
    <citation type="journal article" date="2006" name="EMBO J.">
        <title>RNA-binding IMPs promote cell adhesion and invadopodia formation.</title>
        <authorList>
            <person name="Vikesaa J."/>
            <person name="Hansen T.V."/>
            <person name="Joenson L."/>
            <person name="Borup R."/>
            <person name="Wewer U.M."/>
            <person name="Christiansen J."/>
            <person name="Nielsen F.C."/>
        </authorList>
    </citation>
    <scope>FUNCTION</scope>
    <scope>RNA-BINDING</scope>
    <scope>SUBCELLULAR LOCATION</scope>
</reference>
<reference key="14">
    <citation type="journal article" date="2006" name="Lancet Oncol.">
        <title>Analysis of RNA-binding protein IMP3 to predict metastasis and prognosis of renal-cell carcinoma: a retrospective study.</title>
        <authorList>
            <person name="Jiang Z."/>
            <person name="Chu P.G."/>
            <person name="Woda B.A."/>
            <person name="Rock K.L."/>
            <person name="Liu Q."/>
            <person name="Hsieh C.-C."/>
            <person name="Li C."/>
            <person name="Chen W."/>
            <person name="Duan H.O."/>
            <person name="McDougal S."/>
            <person name="Wu C.-L."/>
        </authorList>
    </citation>
    <scope>SUBCELLULAR LOCATION</scope>
    <scope>TISSUE SPECIFICITY</scope>
</reference>
<reference key="15">
    <citation type="journal article" date="2007" name="Mod. Pathol.">
        <title>IMP3 is a novel biomarker for adenocarcinoma in situ of the uterine cervix: an immunohistochemical study in comparison with p16(INK4a) expression.</title>
        <authorList>
            <person name="Li C."/>
            <person name="Rock K.L."/>
            <person name="Woda B.A."/>
            <person name="Jiang Z."/>
            <person name="Fraire A.E."/>
            <person name="Dresser K."/>
        </authorList>
    </citation>
    <scope>SUBCELLULAR LOCATION</scope>
    <scope>TISSUE SPECIFICITY</scope>
</reference>
<reference key="16">
    <citation type="journal article" date="2007" name="Mol. Cell. Proteomics">
        <title>Molecular composition of IMP1 ribonucleoprotein granules.</title>
        <authorList>
            <person name="Joeson L."/>
            <person name="Vikesaa J."/>
            <person name="Krogh A."/>
            <person name="Nielsen L.K."/>
            <person name="Hansen T."/>
            <person name="Borup R."/>
            <person name="Johnsen A.H."/>
            <person name="Christiansen J."/>
            <person name="Nielsen F.C."/>
        </authorList>
    </citation>
    <scope>INTERACTION WITH IGF2BP1</scope>
</reference>
<reference key="17">
    <citation type="journal article" date="2008" name="Proc. Natl. Acad. Sci. U.S.A.">
        <title>A quantitative atlas of mitotic phosphorylation.</title>
        <authorList>
            <person name="Dephoure N."/>
            <person name="Zhou C."/>
            <person name="Villen J."/>
            <person name="Beausoleil S.A."/>
            <person name="Bakalarski C.E."/>
            <person name="Elledge S.J."/>
            <person name="Gygi S.P."/>
        </authorList>
    </citation>
    <scope>IDENTIFICATION BY MASS SPECTROMETRY [LARGE SCALE ANALYSIS]</scope>
    <source>
        <tissue>Cervix carcinoma</tissue>
    </source>
</reference>
<reference key="18">
    <citation type="journal article" date="2009" name="Sci. Signal.">
        <title>Quantitative phosphoproteomic analysis of T cell receptor signaling reveals system-wide modulation of protein-protein interactions.</title>
        <authorList>
            <person name="Mayya V."/>
            <person name="Lundgren D.H."/>
            <person name="Hwang S.-I."/>
            <person name="Rezaul K."/>
            <person name="Wu L."/>
            <person name="Eng J.K."/>
            <person name="Rodionov V."/>
            <person name="Han D.K."/>
        </authorList>
    </citation>
    <scope>PHOSPHORYLATION [LARGE SCALE ANALYSIS] AT THR-528</scope>
    <scope>IDENTIFICATION BY MASS SPECTROMETRY [LARGE SCALE ANALYSIS]</scope>
    <source>
        <tissue>Leukemic T-cell</tissue>
    </source>
</reference>
<reference key="19">
    <citation type="journal article" date="2010" name="Genes Dev.">
        <title>ZBP1 recognition of beta-actin zipcode induces RNA looping.</title>
        <authorList>
            <person name="Chao J.A."/>
            <person name="Patskovsky Y."/>
            <person name="Patel V."/>
            <person name="Levy M."/>
            <person name="Almo S.C."/>
            <person name="Singer R.H."/>
        </authorList>
    </citation>
    <scope>RNA-BINDING</scope>
    <scope>DOMAIN</scope>
</reference>
<reference key="20">
    <citation type="journal article" date="2011" name="BMC Syst. Biol.">
        <title>Initial characterization of the human central proteome.</title>
        <authorList>
            <person name="Burkard T.R."/>
            <person name="Planyavsky M."/>
            <person name="Kaupe I."/>
            <person name="Breitwieser F.P."/>
            <person name="Buerckstuemmer T."/>
            <person name="Bennett K.L."/>
            <person name="Superti-Furga G."/>
            <person name="Colinge J."/>
        </authorList>
    </citation>
    <scope>IDENTIFICATION BY MASS SPECTROMETRY [LARGE SCALE ANALYSIS]</scope>
</reference>
<reference key="21">
    <citation type="journal article" date="2011" name="Sci. Signal.">
        <title>System-wide temporal characterization of the proteome and phosphoproteome of human embryonic stem cell differentiation.</title>
        <authorList>
            <person name="Rigbolt K.T."/>
            <person name="Prokhorova T.A."/>
            <person name="Akimov V."/>
            <person name="Henningsen J."/>
            <person name="Johansen P.T."/>
            <person name="Kratchmarova I."/>
            <person name="Kassem M."/>
            <person name="Mann M."/>
            <person name="Olsen J.V."/>
            <person name="Blagoev B."/>
        </authorList>
    </citation>
    <scope>PHOSPHORYLATION [LARGE SCALE ANALYSIS] AT SER-184 AND THR-528</scope>
    <scope>IDENTIFICATION BY MASS SPECTROMETRY [LARGE SCALE ANALYSIS]</scope>
</reference>
<reference key="22">
    <citation type="journal article" date="2013" name="Biol. Chem.">
        <title>Subcellular localization and RNP formation of IGF2BPs (IGF2 mRNA-binding proteins) is modulated by distinct RNA-binding domains.</title>
        <authorList>
            <person name="Wachter K."/>
            <person name="Kohn M."/>
            <person name="Stohr N."/>
            <person name="Huttelmaier S."/>
        </authorList>
    </citation>
    <scope>FUNCTION</scope>
    <scope>RNA-BINDING</scope>
    <scope>OLIGOMERIZATION</scope>
    <scope>INTERACTION WITH ELAVL1; DHX9 AND HNRNPU</scope>
    <scope>DOMAIN</scope>
    <scope>SUBCELLULAR LOCATION</scope>
    <scope>MUTAGENESIS OF LYS-213; LYS-294; 423-LYS-LYS-424 AND 505-LYS-GLY-506</scope>
</reference>
<reference key="23">
    <citation type="journal article" date="2013" name="J. Proteome Res.">
        <title>Toward a comprehensive characterization of a human cancer cell phosphoproteome.</title>
        <authorList>
            <person name="Zhou H."/>
            <person name="Di Palma S."/>
            <person name="Preisinger C."/>
            <person name="Peng M."/>
            <person name="Polat A.N."/>
            <person name="Heck A.J."/>
            <person name="Mohammed S."/>
        </authorList>
    </citation>
    <scope>PHOSPHORYLATION [LARGE SCALE ANALYSIS] AT THR-528</scope>
    <scope>IDENTIFICATION BY MASS SPECTROMETRY [LARGE SCALE ANALYSIS]</scope>
    <source>
        <tissue>Cervix carcinoma</tissue>
        <tissue>Erythroleukemia</tissue>
    </source>
</reference>
<reference key="24">
    <citation type="journal article" date="2014" name="Nat. Struct. Mol. Biol.">
        <title>Uncovering global SUMOylation signaling networks in a site-specific manner.</title>
        <authorList>
            <person name="Hendriks I.A."/>
            <person name="D'Souza R.C."/>
            <person name="Yang B."/>
            <person name="Verlaan-de Vries M."/>
            <person name="Mann M."/>
            <person name="Vertegaal A.C."/>
        </authorList>
    </citation>
    <scope>SUMOYLATION [LARGE SCALE ANALYSIS] AT LYS-475</scope>
    <scope>IDENTIFICATION BY MASS SPECTROMETRY [LARGE SCALE ANALYSIS]</scope>
</reference>
<reference key="25">
    <citation type="journal article" date="2015" name="Proteomics">
        <title>N-terminome analysis of the human mitochondrial proteome.</title>
        <authorList>
            <person name="Vaca Jacome A.S."/>
            <person name="Rabilloud T."/>
            <person name="Schaeffer-Reiss C."/>
            <person name="Rompais M."/>
            <person name="Ayoub D."/>
            <person name="Lane L."/>
            <person name="Bairoch A."/>
            <person name="Van Dorsselaer A."/>
            <person name="Carapito C."/>
        </authorList>
    </citation>
    <scope>IDENTIFICATION BY MASS SPECTROMETRY [LARGE SCALE ANALYSIS]</scope>
</reference>
<reference key="26">
    <citation type="journal article" date="2017" name="Nat. Struct. Mol. Biol.">
        <title>Site-specific mapping of the human SUMO proteome reveals co-modification with phosphorylation.</title>
        <authorList>
            <person name="Hendriks I.A."/>
            <person name="Lyon D."/>
            <person name="Young C."/>
            <person name="Jensen L.J."/>
            <person name="Vertegaal A.C."/>
            <person name="Nielsen M.L."/>
        </authorList>
    </citation>
    <scope>SUMOYLATION [LARGE SCALE ANALYSIS] AT LYS-450 AND LYS-475</scope>
    <scope>IDENTIFICATION BY MASS SPECTROMETRY [LARGE SCALE ANALYSIS]</scope>
</reference>
<reference key="27">
    <citation type="journal article" date="2018" name="Nat. Cell Biol.">
        <title>Recognition of RNA N6-methyladenosine by IGF2BP proteins enhances mRNA stability and translation.</title>
        <authorList>
            <person name="Huang H."/>
            <person name="Weng H."/>
            <person name="Sun W."/>
            <person name="Qin X."/>
            <person name="Shi H."/>
            <person name="Wu H."/>
            <person name="Zhao B.S."/>
            <person name="Mesquita A."/>
            <person name="Liu C."/>
            <person name="Yuan C.L."/>
            <person name="Hu Y.C."/>
            <person name="Huettelmaier S."/>
            <person name="Skibbe J.R."/>
            <person name="Su R."/>
            <person name="Deng X."/>
            <person name="Dong L."/>
            <person name="Sun M."/>
            <person name="Li C."/>
            <person name="Nachtergaele S."/>
            <person name="Wang Y."/>
            <person name="Hu C."/>
            <person name="Ferchen K."/>
            <person name="Greis K.D."/>
            <person name="Jiang X."/>
            <person name="Wei M."/>
            <person name="Qu L."/>
            <person name="Guan J.L."/>
            <person name="He C."/>
            <person name="Yang J."/>
            <person name="Chen J."/>
        </authorList>
    </citation>
    <scope>FUNCTION</scope>
    <scope>INTERACTION WITH ELAVL1; MATR3 AND PABPC1</scope>
    <scope>SUBCELLULAR LOCATION</scope>
    <scope>ROLE OF KH DOMAINS</scope>
    <scope>MUTAGENESIS OF LYS-213; LYS-294; 423-LYS-LYS-424 AND 505-LYS-GLY-506</scope>
    <scope>IDENTIFICATION BY MASS SPECTROMETRY</scope>
</reference>
<reference key="28">
    <citation type="submission" date="2007-06" db="PDB data bank">
        <title>Solution structure of RNA binding domain in insulin-like growth factor 2 mRNA-binding protein 3.</title>
        <authorList>
            <consortium name="RIKEN structural genomics initiative (RSGI)"/>
        </authorList>
    </citation>
    <scope>STRUCTURE BY NMR OF 73-161</scope>
</reference>
<organism>
    <name type="scientific">Homo sapiens</name>
    <name type="common">Human</name>
    <dbReference type="NCBI Taxonomy" id="9606"/>
    <lineage>
        <taxon>Eukaryota</taxon>
        <taxon>Metazoa</taxon>
        <taxon>Chordata</taxon>
        <taxon>Craniata</taxon>
        <taxon>Vertebrata</taxon>
        <taxon>Euteleostomi</taxon>
        <taxon>Mammalia</taxon>
        <taxon>Eutheria</taxon>
        <taxon>Euarchontoglires</taxon>
        <taxon>Primates</taxon>
        <taxon>Haplorrhini</taxon>
        <taxon>Catarrhini</taxon>
        <taxon>Hominidae</taxon>
        <taxon>Homo</taxon>
    </lineage>
</organism>
<comment type="function">
    <text evidence="8 13 14">RNA-binding factor that may recruit target transcripts to cytoplasmic protein-RNA complexes (mRNPs). This transcript 'caging' into mRNPs allows mRNA transport and transient storage. It also modulates the rate and location at which target transcripts encounter the translational apparatus and shields them from endonuclease attacks or microRNA-mediated degradation. Preferentially binds to N6-methyladenosine (m6A)-containing mRNAs and increases their stability (PubMed:29476152). Binds to the 3'-UTR of CD44 mRNA and stabilizes it, hence promotes cell adhesion and invadopodia formation in cancer cells. Binds to beta-actin/ACTB and MYC transcripts. Increases MYC mRNA stability by binding to the coding region instability determinant (CRD) and binding is enhanced by m6A-modification of the CRD (PubMed:29476152). Binds to the 5'-UTR of the insulin-like growth factor 2 (IGF2) mRNAs.</text>
</comment>
<comment type="subunit">
    <text evidence="11 13 14">Can form homooligomers and heterooligomers with IGF2BP1 and IGF2BP3 in an RNA-dependent manner (PubMed:23640942). Interacts with IGF2BP1 (PubMed:17289661). Interacts with ELAVL1, DHX9, HNRNPU, MATR3 and PABPC1 (PubMed:23640942, PubMed:29476152).</text>
</comment>
<comment type="interaction">
    <interactant intactId="EBI-1058566">
        <id>O00425</id>
    </interactant>
    <interactant intactId="EBI-1053596">
        <id>Q13627</id>
        <label>DYRK1A</label>
    </interactant>
    <organismsDiffer>false</organismsDiffer>
    <experiments>3</experiments>
</comment>
<comment type="interaction">
    <interactant intactId="EBI-1058566">
        <id>O00425</id>
    </interactant>
    <interactant intactId="EBI-946095">
        <id>Q15365</id>
        <label>PCBP1</label>
    </interactant>
    <organismsDiffer>false</organismsDiffer>
    <experiments>3</experiments>
</comment>
<comment type="interaction">
    <interactant intactId="EBI-1058566">
        <id>O00425</id>
    </interactant>
    <interactant intactId="EBI-372899">
        <id>Q13148</id>
        <label>TARDBP</label>
    </interactant>
    <organismsDiffer>false</organismsDiffer>
    <experiments>6</experiments>
</comment>
<comment type="subcellular location">
    <subcellularLocation>
        <location>Nucleus</location>
    </subcellularLocation>
    <subcellularLocation>
        <location>Cytoplasm</location>
    </subcellularLocation>
    <subcellularLocation>
        <location evidence="14">Cytoplasm</location>
        <location evidence="14">P-body</location>
    </subcellularLocation>
    <subcellularLocation>
        <location evidence="14">Cytoplasm</location>
        <location evidence="14">Stress granule</location>
    </subcellularLocation>
    <text>Found in lamellipodia of the leading edge, in the perinuclear region, and beneath the plasma membrane. The subcytoplasmic localization is cell specific and regulated by cell contact and growth. Localized at the connecting piece and the tail of the spermatozoa. Colocalized with CD44 mRNA in RNP granules. In response to cellular stress, such as oxidative stress, recruited to stress granules.</text>
</comment>
<comment type="alternative products">
    <event type="alternative splicing"/>
    <isoform>
        <id>O00425-1</id>
        <name>1</name>
        <sequence type="displayed"/>
    </isoform>
    <isoform>
        <id>O00425-2</id>
        <name>2</name>
        <sequence type="described" ref="VSP_024172"/>
    </isoform>
</comment>
<comment type="tissue specificity">
    <text evidence="4 5 6 7 9 10 15 16">Expressed in fetal liver, fetal lung, fetal kidney, fetal thymus, fetal placenta, fetal follicles of ovary and gonocytes of testis, growing oocytes, spermatogonia and semen (at protein level). Expressed in cervix adenocarcinoma, in testicular, pancreatic and renal-cell carcinomas (at protein level). Expressed ubiquitously during fetal development at 8 and 14 weeks of gestation. Expressed in ovary, testis, brain, placenta, pancreatic cancer tissues and pancreatic cancer cell lines.</text>
</comment>
<comment type="domain">
    <text evidence="12 13 14">All KH domains contribute to binding to target mRNA. Domains KH3 and KH4 are the major RNA-binding modules, although KH1 and KH2 also contribute (PubMed:29476152). The KH domains are also required for RNA-dependent homo- and heterooligomerization. The integrity of KH domains seems not to be required for localization to stress granules.</text>
</comment>
<comment type="miscellaneous">
    <text>Autoantibodies against IGF2BP3 are detected in sera from some patients with a variety of carcinomas.</text>
</comment>
<comment type="similarity">
    <text evidence="18">Belongs to the RRM IMP/VICKZ family.</text>
</comment>
<sequence>MNKLYIGNLSENAAPSDLESIFKDAKIPVSGPFLVKTGYAFVDCPDESWALKAIEALSGKIELHGKPIEVEHSVPKRQRIRKLQIRNIPPHLQWEVLDSLLVQYGVVESCEQVNTDSETAVVNVTYSSKDQARQALDKLNGFQLENFTLKVAYIPDEMAAQQNPLQQPRGRRGLGQRGSSRQGSPGSVSKQKPCDLPLRLLVPTQFVGAIIGKEGATIRNITKQTQSKIDVHRKENAGAAEKSITILSTPEGTSAACKSILEIMHKEAQDIKFTEEIPLKILAHNNFVGRLIGKEGRNLKKIEQDTDTKITISPLQELTLYNPERTITVKGNVETCAKAEEEIMKKIRESYENDIASMNLQAHLIPGLNLNALGLFPPTSGMPPPTSGPPSAMTPPYPQFEQSETETVHLFIPALSVGAIIGKQGQHIKQLSRFAGASIKIAPAEAPDAKVRMVIITGPPEAQFKAQGRIYGKIKEENFVSPKEEVKLEAHIRVPSFAAGRVIGKGGKTVNELQNLSSAEVVVPRDQTPDENDQVVVKITGHFYACQVAQRKIQEILTQVKQHQQQKALQSGPPQSRRK</sequence>
<protein>
    <recommendedName>
        <fullName>Insulin-like growth factor 2 mRNA-binding protein 3</fullName>
        <shortName>IGF2 mRNA-binding protein 3</shortName>
        <shortName>IMP-3</shortName>
    </recommendedName>
    <alternativeName>
        <fullName>IGF-II mRNA-binding protein 3</fullName>
    </alternativeName>
    <alternativeName>
        <fullName>KH domain-containing protein overexpressed in cancer</fullName>
        <shortName>hKOC</shortName>
    </alternativeName>
    <alternativeName>
        <fullName>VICKZ family member 3</fullName>
    </alternativeName>
</protein>
<evidence type="ECO:0000255" key="1">
    <source>
        <dbReference type="PROSITE-ProRule" id="PRU00117"/>
    </source>
</evidence>
<evidence type="ECO:0000255" key="2">
    <source>
        <dbReference type="PROSITE-ProRule" id="PRU00176"/>
    </source>
</evidence>
<evidence type="ECO:0000256" key="3">
    <source>
        <dbReference type="SAM" id="MobiDB-lite"/>
    </source>
</evidence>
<evidence type="ECO:0000269" key="4">
    <source>
    </source>
</evidence>
<evidence type="ECO:0000269" key="5">
    <source>
    </source>
</evidence>
<evidence type="ECO:0000269" key="6">
    <source>
    </source>
</evidence>
<evidence type="ECO:0000269" key="7">
    <source>
    </source>
</evidence>
<evidence type="ECO:0000269" key="8">
    <source>
    </source>
</evidence>
<evidence type="ECO:0000269" key="9">
    <source>
    </source>
</evidence>
<evidence type="ECO:0000269" key="10">
    <source>
    </source>
</evidence>
<evidence type="ECO:0000269" key="11">
    <source>
    </source>
</evidence>
<evidence type="ECO:0000269" key="12">
    <source>
    </source>
</evidence>
<evidence type="ECO:0000269" key="13">
    <source>
    </source>
</evidence>
<evidence type="ECO:0000269" key="14">
    <source>
    </source>
</evidence>
<evidence type="ECO:0000269" key="15">
    <source>
    </source>
</evidence>
<evidence type="ECO:0000269" key="16">
    <source>
    </source>
</evidence>
<evidence type="ECO:0000303" key="17">
    <source>
    </source>
</evidence>
<evidence type="ECO:0000305" key="18"/>
<evidence type="ECO:0007744" key="19">
    <source>
    </source>
</evidence>
<evidence type="ECO:0007744" key="20">
    <source>
    </source>
</evidence>
<evidence type="ECO:0007744" key="21">
    <source>
    </source>
</evidence>
<evidence type="ECO:0007744" key="22">
    <source>
    </source>
</evidence>
<evidence type="ECO:0007744" key="23">
    <source>
    </source>
</evidence>
<evidence type="ECO:0007829" key="24">
    <source>
        <dbReference type="PDB" id="2E44"/>
    </source>
</evidence>
<evidence type="ECO:0007829" key="25">
    <source>
        <dbReference type="PDB" id="6FQ1"/>
    </source>
</evidence>
<evidence type="ECO:0007829" key="26">
    <source>
        <dbReference type="PDB" id="6GX6"/>
    </source>
</evidence>
<name>IF2B3_HUMAN</name>
<dbReference type="EMBL" id="U76705">
    <property type="protein sequence ID" value="AAD09223.1"/>
    <property type="molecule type" value="mRNA"/>
</dbReference>
<dbReference type="EMBL" id="U97188">
    <property type="protein sequence ID" value="AAC35208.1"/>
    <property type="molecule type" value="mRNA"/>
</dbReference>
<dbReference type="EMBL" id="BX640800">
    <property type="protein sequence ID" value="CAE45883.1"/>
    <property type="molecule type" value="mRNA"/>
</dbReference>
<dbReference type="EMBL" id="BX648488">
    <property type="protein sequence ID" value="CAH56186.1"/>
    <property type="molecule type" value="mRNA"/>
</dbReference>
<dbReference type="EMBL" id="AC005082">
    <property type="status" value="NOT_ANNOTATED_CDS"/>
    <property type="molecule type" value="Genomic_DNA"/>
</dbReference>
<dbReference type="EMBL" id="AC021876">
    <property type="status" value="NOT_ANNOTATED_CDS"/>
    <property type="molecule type" value="Genomic_DNA"/>
</dbReference>
<dbReference type="EMBL" id="AC079780">
    <property type="status" value="NOT_ANNOTATED_CDS"/>
    <property type="molecule type" value="Genomic_DNA"/>
</dbReference>
<dbReference type="EMBL" id="BC065269">
    <property type="protein sequence ID" value="AAH65269.1"/>
    <property type="molecule type" value="mRNA"/>
</dbReference>
<dbReference type="CCDS" id="CCDS5382.1">
    <molecule id="O00425-1"/>
</dbReference>
<dbReference type="RefSeq" id="NP_006538.2">
    <molecule id="O00425-1"/>
    <property type="nucleotide sequence ID" value="NM_006547.2"/>
</dbReference>
<dbReference type="PDB" id="2E44">
    <property type="method" value="NMR"/>
    <property type="chains" value="A=73-161"/>
</dbReference>
<dbReference type="PDB" id="6FQ1">
    <property type="method" value="X-ray"/>
    <property type="resolution" value="1.31 A"/>
    <property type="chains" value="A/B=1-161"/>
</dbReference>
<dbReference type="PDB" id="6FQR">
    <property type="method" value="X-ray"/>
    <property type="resolution" value="2.10 A"/>
    <property type="chains" value="A/B=1-161"/>
</dbReference>
<dbReference type="PDB" id="6GQE">
    <property type="method" value="X-ray"/>
    <property type="resolution" value="2.15 A"/>
    <property type="chains" value="A=192-355"/>
</dbReference>
<dbReference type="PDB" id="6GX6">
    <property type="method" value="X-ray"/>
    <property type="resolution" value="2.00 A"/>
    <property type="chains" value="A=1-161"/>
</dbReference>
<dbReference type="PDBsum" id="2E44"/>
<dbReference type="PDBsum" id="6FQ1"/>
<dbReference type="PDBsum" id="6FQR"/>
<dbReference type="PDBsum" id="6GQE"/>
<dbReference type="PDBsum" id="6GX6"/>
<dbReference type="SMR" id="O00425"/>
<dbReference type="BioGRID" id="115887">
    <property type="interactions" value="585"/>
</dbReference>
<dbReference type="DIP" id="DIP-44171N"/>
<dbReference type="FunCoup" id="O00425">
    <property type="interactions" value="2436"/>
</dbReference>
<dbReference type="IntAct" id="O00425">
    <property type="interactions" value="194"/>
</dbReference>
<dbReference type="MINT" id="O00425"/>
<dbReference type="STRING" id="9606.ENSP00000258729"/>
<dbReference type="GlyGen" id="O00425">
    <property type="glycosylation" value="2 sites, 1 O-linked glycan (1 site)"/>
</dbReference>
<dbReference type="iPTMnet" id="O00425"/>
<dbReference type="MetOSite" id="O00425"/>
<dbReference type="PhosphoSitePlus" id="O00425"/>
<dbReference type="SwissPalm" id="O00425"/>
<dbReference type="BioMuta" id="IGF2BP3"/>
<dbReference type="jPOST" id="O00425"/>
<dbReference type="MassIVE" id="O00425"/>
<dbReference type="PaxDb" id="9606-ENSP00000258729"/>
<dbReference type="PeptideAtlas" id="O00425"/>
<dbReference type="ProteomicsDB" id="47882">
    <molecule id="O00425-1"/>
</dbReference>
<dbReference type="ProteomicsDB" id="47883">
    <molecule id="O00425-2"/>
</dbReference>
<dbReference type="Pumba" id="O00425"/>
<dbReference type="Antibodypedia" id="1056">
    <property type="antibodies" value="431 antibodies from 39 providers"/>
</dbReference>
<dbReference type="DNASU" id="10643"/>
<dbReference type="Ensembl" id="ENST00000258729.8">
    <molecule id="O00425-1"/>
    <property type="protein sequence ID" value="ENSP00000258729.3"/>
    <property type="gene ID" value="ENSG00000136231.14"/>
</dbReference>
<dbReference type="Ensembl" id="ENST00000619562.4">
    <molecule id="O00425-2"/>
    <property type="protein sequence ID" value="ENSP00000480267.1"/>
    <property type="gene ID" value="ENSG00000136231.14"/>
</dbReference>
<dbReference type="GeneID" id="10643"/>
<dbReference type="KEGG" id="hsa:10643"/>
<dbReference type="MANE-Select" id="ENST00000258729.8">
    <property type="protein sequence ID" value="ENSP00000258729.3"/>
    <property type="RefSeq nucleotide sequence ID" value="NM_006547.3"/>
    <property type="RefSeq protein sequence ID" value="NP_006538.2"/>
</dbReference>
<dbReference type="UCSC" id="uc003swf.4">
    <molecule id="O00425-1"/>
    <property type="organism name" value="human"/>
</dbReference>
<dbReference type="AGR" id="HGNC:28868"/>
<dbReference type="CTD" id="10643"/>
<dbReference type="DisGeNET" id="10643"/>
<dbReference type="GeneCards" id="IGF2BP3"/>
<dbReference type="HGNC" id="HGNC:28868">
    <property type="gene designation" value="IGF2BP3"/>
</dbReference>
<dbReference type="HPA" id="ENSG00000136231">
    <property type="expression patterns" value="Tissue enhanced (lymphoid tissue, placenta)"/>
</dbReference>
<dbReference type="MIM" id="608259">
    <property type="type" value="gene"/>
</dbReference>
<dbReference type="neXtProt" id="NX_O00425"/>
<dbReference type="OpenTargets" id="ENSG00000136231"/>
<dbReference type="PharmGKB" id="PA128394576"/>
<dbReference type="VEuPathDB" id="HostDB:ENSG00000136231"/>
<dbReference type="eggNOG" id="KOG2193">
    <property type="taxonomic scope" value="Eukaryota"/>
</dbReference>
<dbReference type="GeneTree" id="ENSGT00940000154957"/>
<dbReference type="HOGENOM" id="CLU_020744_1_0_1"/>
<dbReference type="InParanoid" id="O00425"/>
<dbReference type="OMA" id="CPDEGWA"/>
<dbReference type="OrthoDB" id="752362at2759"/>
<dbReference type="PAN-GO" id="O00425">
    <property type="GO annotations" value="7 GO annotations based on evolutionary models"/>
</dbReference>
<dbReference type="PhylomeDB" id="O00425"/>
<dbReference type="TreeFam" id="TF320229"/>
<dbReference type="PathwayCommons" id="O00425"/>
<dbReference type="Reactome" id="R-HSA-428359">
    <property type="pathway name" value="Insulin-like Growth Factor-2 mRNA Binding Proteins (IGF2BPs/IMPs/VICKZs) bind RNA"/>
</dbReference>
<dbReference type="SignaLink" id="O00425"/>
<dbReference type="BioGRID-ORCS" id="10643">
    <property type="hits" value="23 hits in 1172 CRISPR screens"/>
</dbReference>
<dbReference type="CD-CODE" id="232F8A39">
    <property type="entry name" value="P-body"/>
</dbReference>
<dbReference type="CD-CODE" id="DEE660B4">
    <property type="entry name" value="Stress granule"/>
</dbReference>
<dbReference type="ChiTaRS" id="IGF2BP3">
    <property type="organism name" value="human"/>
</dbReference>
<dbReference type="EvolutionaryTrace" id="O00425"/>
<dbReference type="GeneWiki" id="IGF2BP3"/>
<dbReference type="GenomeRNAi" id="10643"/>
<dbReference type="Pharos" id="O00425">
    <property type="development level" value="Tbio"/>
</dbReference>
<dbReference type="PRO" id="PR:O00425"/>
<dbReference type="Proteomes" id="UP000005640">
    <property type="component" value="Chromosome 7"/>
</dbReference>
<dbReference type="RNAct" id="O00425">
    <property type="molecule type" value="protein"/>
</dbReference>
<dbReference type="Bgee" id="ENSG00000136231">
    <property type="expression patterns" value="Expressed in secondary oocyte and 134 other cell types or tissues"/>
</dbReference>
<dbReference type="ExpressionAtlas" id="O00425">
    <property type="expression patterns" value="baseline and differential"/>
</dbReference>
<dbReference type="GO" id="GO:0005737">
    <property type="term" value="C:cytoplasm"/>
    <property type="evidence" value="ECO:0000314"/>
    <property type="project" value="BHF-UCL"/>
</dbReference>
<dbReference type="GO" id="GO:0010494">
    <property type="term" value="C:cytoplasmic stress granule"/>
    <property type="evidence" value="ECO:0000314"/>
    <property type="project" value="UniProtKB"/>
</dbReference>
<dbReference type="GO" id="GO:0005829">
    <property type="term" value="C:cytosol"/>
    <property type="evidence" value="ECO:0000314"/>
    <property type="project" value="HPA"/>
</dbReference>
<dbReference type="GO" id="GO:0005634">
    <property type="term" value="C:nucleus"/>
    <property type="evidence" value="ECO:0000318"/>
    <property type="project" value="GO_Central"/>
</dbReference>
<dbReference type="GO" id="GO:0000932">
    <property type="term" value="C:P-body"/>
    <property type="evidence" value="ECO:0000314"/>
    <property type="project" value="UniProtKB"/>
</dbReference>
<dbReference type="GO" id="GO:0003730">
    <property type="term" value="F:mRNA 3'-UTR binding"/>
    <property type="evidence" value="ECO:0000314"/>
    <property type="project" value="UniProtKB"/>
</dbReference>
<dbReference type="GO" id="GO:0048027">
    <property type="term" value="F:mRNA 5'-UTR binding"/>
    <property type="evidence" value="ECO:0000314"/>
    <property type="project" value="BHF-UCL"/>
</dbReference>
<dbReference type="GO" id="GO:1990247">
    <property type="term" value="F:N6-methyladenosine-containing RNA reader activity"/>
    <property type="evidence" value="ECO:0000314"/>
    <property type="project" value="UniProtKB"/>
</dbReference>
<dbReference type="GO" id="GO:0003723">
    <property type="term" value="F:RNA binding"/>
    <property type="evidence" value="ECO:0007005"/>
    <property type="project" value="UniProtKB"/>
</dbReference>
<dbReference type="GO" id="GO:0045182">
    <property type="term" value="F:translation regulator activity"/>
    <property type="evidence" value="ECO:0000250"/>
    <property type="project" value="BHF-UCL"/>
</dbReference>
<dbReference type="GO" id="GO:0009653">
    <property type="term" value="P:anatomical structure morphogenesis"/>
    <property type="evidence" value="ECO:0000304"/>
    <property type="project" value="ProtInc"/>
</dbReference>
<dbReference type="GO" id="GO:0070934">
    <property type="term" value="P:CRD-mediated mRNA stabilization"/>
    <property type="evidence" value="ECO:0000314"/>
    <property type="project" value="UniProtKB"/>
</dbReference>
<dbReference type="GO" id="GO:0051028">
    <property type="term" value="P:mRNA transport"/>
    <property type="evidence" value="ECO:0007669"/>
    <property type="project" value="UniProtKB-KW"/>
</dbReference>
<dbReference type="GO" id="GO:0017148">
    <property type="term" value="P:negative regulation of translation"/>
    <property type="evidence" value="ECO:0000250"/>
    <property type="project" value="BHF-UCL"/>
</dbReference>
<dbReference type="GO" id="GO:0007399">
    <property type="term" value="P:nervous system development"/>
    <property type="evidence" value="ECO:0000318"/>
    <property type="project" value="GO_Central"/>
</dbReference>
<dbReference type="GO" id="GO:0001817">
    <property type="term" value="P:regulation of cytokine production"/>
    <property type="evidence" value="ECO:0000305"/>
    <property type="project" value="BHF-UCL"/>
</dbReference>
<dbReference type="GO" id="GO:0006412">
    <property type="term" value="P:translation"/>
    <property type="evidence" value="ECO:0000304"/>
    <property type="project" value="ProtInc"/>
</dbReference>
<dbReference type="CDD" id="cd22492">
    <property type="entry name" value="KH-I_IGF2BP3_rpt1"/>
    <property type="match status" value="1"/>
</dbReference>
<dbReference type="CDD" id="cd22498">
    <property type="entry name" value="KH-I_IGF2BP3_rpt3"/>
    <property type="match status" value="1"/>
</dbReference>
<dbReference type="CDD" id="cd12627">
    <property type="entry name" value="RRM1_IGF2BP3"/>
    <property type="match status" value="1"/>
</dbReference>
<dbReference type="CDD" id="cd12630">
    <property type="entry name" value="RRM2_IGF2BP3"/>
    <property type="match status" value="1"/>
</dbReference>
<dbReference type="FunFam" id="3.30.70.330:FF:000203">
    <property type="entry name" value="insulin-like growth factor 2 mRNA-binding protein 1"/>
    <property type="match status" value="1"/>
</dbReference>
<dbReference type="FunFam" id="3.30.310.210:FF:000001">
    <property type="entry name" value="insulin-like growth factor 2 mRNA-binding protein 1 isoform X1"/>
    <property type="match status" value="1"/>
</dbReference>
<dbReference type="FunFam" id="3.30.1370.10:FF:000026">
    <property type="entry name" value="Insulin-like growth factor 2 mRNA-binding protein 3"/>
    <property type="match status" value="1"/>
</dbReference>
<dbReference type="FunFam" id="3.30.1370.10:FF:000027">
    <property type="entry name" value="insulin-like growth factor 2 mRNA-binding protein 3 isoform X1"/>
    <property type="match status" value="1"/>
</dbReference>
<dbReference type="FunFam" id="3.30.70.330:FF:000099">
    <property type="entry name" value="insulin-like growth factor 2 mRNA-binding protein 3 isoform X1"/>
    <property type="match status" value="1"/>
</dbReference>
<dbReference type="Gene3D" id="3.30.310.210">
    <property type="match status" value="1"/>
</dbReference>
<dbReference type="Gene3D" id="3.30.70.330">
    <property type="match status" value="2"/>
</dbReference>
<dbReference type="Gene3D" id="3.30.1370.10">
    <property type="entry name" value="K Homology domain, type 1"/>
    <property type="match status" value="2"/>
</dbReference>
<dbReference type="InterPro" id="IPR004087">
    <property type="entry name" value="KH_dom"/>
</dbReference>
<dbReference type="InterPro" id="IPR004088">
    <property type="entry name" value="KH_dom_type_1"/>
</dbReference>
<dbReference type="InterPro" id="IPR036612">
    <property type="entry name" value="KH_dom_type_1_sf"/>
</dbReference>
<dbReference type="InterPro" id="IPR012677">
    <property type="entry name" value="Nucleotide-bd_a/b_plait_sf"/>
</dbReference>
<dbReference type="InterPro" id="IPR035979">
    <property type="entry name" value="RBD_domain_sf"/>
</dbReference>
<dbReference type="InterPro" id="IPR000504">
    <property type="entry name" value="RRM_dom"/>
</dbReference>
<dbReference type="PANTHER" id="PTHR10288">
    <property type="entry name" value="KH DOMAIN CONTAINING RNA BINDING PROTEIN"/>
    <property type="match status" value="1"/>
</dbReference>
<dbReference type="Pfam" id="PF00013">
    <property type="entry name" value="KH_1"/>
    <property type="match status" value="4"/>
</dbReference>
<dbReference type="Pfam" id="PF00076">
    <property type="entry name" value="RRM_1"/>
    <property type="match status" value="2"/>
</dbReference>
<dbReference type="SMART" id="SM00322">
    <property type="entry name" value="KH"/>
    <property type="match status" value="4"/>
</dbReference>
<dbReference type="SMART" id="SM00360">
    <property type="entry name" value="RRM"/>
    <property type="match status" value="2"/>
</dbReference>
<dbReference type="SUPFAM" id="SSF54791">
    <property type="entry name" value="Eukaryotic type KH-domain (KH-domain type I)"/>
    <property type="match status" value="4"/>
</dbReference>
<dbReference type="SUPFAM" id="SSF54928">
    <property type="entry name" value="RNA-binding domain, RBD"/>
    <property type="match status" value="1"/>
</dbReference>
<dbReference type="PROSITE" id="PS50084">
    <property type="entry name" value="KH_TYPE_1"/>
    <property type="match status" value="4"/>
</dbReference>
<dbReference type="PROSITE" id="PS50102">
    <property type="entry name" value="RRM"/>
    <property type="match status" value="2"/>
</dbReference>
<gene>
    <name type="primary">IGF2BP3</name>
    <name type="synonym">IMP3</name>
    <name type="synonym">KOC1</name>
    <name type="synonym">VICKZ3</name>
</gene>